<accession>Q4AA96</accession>
<gene>
    <name evidence="1" type="primary">hisS</name>
    <name type="ordered locus">MHJ_0234</name>
</gene>
<name>SYH_MESHJ</name>
<feature type="chain" id="PRO_0000136201" description="Histidine--tRNA ligase">
    <location>
        <begin position="1"/>
        <end position="428"/>
    </location>
</feature>
<organism>
    <name type="scientific">Mesomycoplasma hyopneumoniae (strain J / ATCC 25934 / NCTC 10110)</name>
    <name type="common">Mycoplasma hyopneumoniae</name>
    <dbReference type="NCBI Taxonomy" id="262719"/>
    <lineage>
        <taxon>Bacteria</taxon>
        <taxon>Bacillati</taxon>
        <taxon>Mycoplasmatota</taxon>
        <taxon>Mycoplasmoidales</taxon>
        <taxon>Metamycoplasmataceae</taxon>
        <taxon>Mesomycoplasma</taxon>
    </lineage>
</organism>
<keyword id="KW-0030">Aminoacyl-tRNA synthetase</keyword>
<keyword id="KW-0067">ATP-binding</keyword>
<keyword id="KW-0963">Cytoplasm</keyword>
<keyword id="KW-0436">Ligase</keyword>
<keyword id="KW-0547">Nucleotide-binding</keyword>
<keyword id="KW-0648">Protein biosynthesis</keyword>
<reference key="1">
    <citation type="journal article" date="2005" name="J. Bacteriol.">
        <title>Swine and poultry pathogens: the complete genome sequences of two strains of Mycoplasma hyopneumoniae and a strain of Mycoplasma synoviae.</title>
        <authorList>
            <person name="Vasconcelos A.T.R."/>
            <person name="Ferreira H.B."/>
            <person name="Bizarro C.V."/>
            <person name="Bonatto S.L."/>
            <person name="Carvalho M.O."/>
            <person name="Pinto P.M."/>
            <person name="Almeida D.F."/>
            <person name="Almeida L.G.P."/>
            <person name="Almeida R."/>
            <person name="Alves-Junior L."/>
            <person name="Assuncao E.N."/>
            <person name="Azevedo V.A.C."/>
            <person name="Bogo M.R."/>
            <person name="Brigido M.M."/>
            <person name="Brocchi M."/>
            <person name="Burity H.A."/>
            <person name="Camargo A.A."/>
            <person name="Camargo S.S."/>
            <person name="Carepo M.S."/>
            <person name="Carraro D.M."/>
            <person name="de Mattos Cascardo J.C."/>
            <person name="Castro L.A."/>
            <person name="Cavalcanti G."/>
            <person name="Chemale G."/>
            <person name="Collevatti R.G."/>
            <person name="Cunha C.W."/>
            <person name="Dallagiovanna B."/>
            <person name="Dambros B.P."/>
            <person name="Dellagostin O.A."/>
            <person name="Falcao C."/>
            <person name="Fantinatti-Garboggini F."/>
            <person name="Felipe M.S.S."/>
            <person name="Fiorentin L."/>
            <person name="Franco G.R."/>
            <person name="Freitas N.S.A."/>
            <person name="Frias D."/>
            <person name="Grangeiro T.B."/>
            <person name="Grisard E.C."/>
            <person name="Guimaraes C.T."/>
            <person name="Hungria M."/>
            <person name="Jardim S.N."/>
            <person name="Krieger M.A."/>
            <person name="Laurino J.P."/>
            <person name="Lima L.F.A."/>
            <person name="Lopes M.I."/>
            <person name="Loreto E.L.S."/>
            <person name="Madeira H.M.F."/>
            <person name="Manfio G.P."/>
            <person name="Maranhao A.Q."/>
            <person name="Martinkovics C.T."/>
            <person name="Medeiros S.R.B."/>
            <person name="Moreira M.A.M."/>
            <person name="Neiva M."/>
            <person name="Ramalho-Neto C.E."/>
            <person name="Nicolas M.F."/>
            <person name="Oliveira S.C."/>
            <person name="Paixao R.F.C."/>
            <person name="Pedrosa F.O."/>
            <person name="Pena S.D.J."/>
            <person name="Pereira M."/>
            <person name="Pereira-Ferrari L."/>
            <person name="Piffer I."/>
            <person name="Pinto L.S."/>
            <person name="Potrich D.P."/>
            <person name="Salim A.C.M."/>
            <person name="Santos F.R."/>
            <person name="Schmitt R."/>
            <person name="Schneider M.P.C."/>
            <person name="Schrank A."/>
            <person name="Schrank I.S."/>
            <person name="Schuck A.F."/>
            <person name="Seuanez H.N."/>
            <person name="Silva D.W."/>
            <person name="Silva R."/>
            <person name="Silva S.C."/>
            <person name="Soares C.M.A."/>
            <person name="Souza K.R.L."/>
            <person name="Souza R.C."/>
            <person name="Staats C.C."/>
            <person name="Steffens M.B.R."/>
            <person name="Teixeira S.M.R."/>
            <person name="Urmenyi T.P."/>
            <person name="Vainstein M.H."/>
            <person name="Zuccherato L.W."/>
            <person name="Simpson A.J.G."/>
            <person name="Zaha A."/>
        </authorList>
    </citation>
    <scope>NUCLEOTIDE SEQUENCE [LARGE SCALE GENOMIC DNA]</scope>
    <source>
        <strain>J / ATCC 25934 / NCTC 10110</strain>
    </source>
</reference>
<evidence type="ECO:0000255" key="1">
    <source>
        <dbReference type="HAMAP-Rule" id="MF_00127"/>
    </source>
</evidence>
<dbReference type="EC" id="6.1.1.21" evidence="1"/>
<dbReference type="EMBL" id="AE017243">
    <property type="protein sequence ID" value="AAZ44325.1"/>
    <property type="molecule type" value="Genomic_DNA"/>
</dbReference>
<dbReference type="RefSeq" id="WP_011284016.1">
    <property type="nucleotide sequence ID" value="NC_007295.1"/>
</dbReference>
<dbReference type="SMR" id="Q4AA96"/>
<dbReference type="GeneID" id="41334539"/>
<dbReference type="KEGG" id="mhj:MHJ_0234"/>
<dbReference type="eggNOG" id="COG0124">
    <property type="taxonomic scope" value="Bacteria"/>
</dbReference>
<dbReference type="HOGENOM" id="CLU_025113_1_2_14"/>
<dbReference type="OrthoDB" id="9800814at2"/>
<dbReference type="Proteomes" id="UP000000548">
    <property type="component" value="Chromosome"/>
</dbReference>
<dbReference type="GO" id="GO:0005737">
    <property type="term" value="C:cytoplasm"/>
    <property type="evidence" value="ECO:0007669"/>
    <property type="project" value="UniProtKB-SubCell"/>
</dbReference>
<dbReference type="GO" id="GO:0005524">
    <property type="term" value="F:ATP binding"/>
    <property type="evidence" value="ECO:0007669"/>
    <property type="project" value="UniProtKB-UniRule"/>
</dbReference>
<dbReference type="GO" id="GO:0004821">
    <property type="term" value="F:histidine-tRNA ligase activity"/>
    <property type="evidence" value="ECO:0007669"/>
    <property type="project" value="UniProtKB-UniRule"/>
</dbReference>
<dbReference type="GO" id="GO:0006427">
    <property type="term" value="P:histidyl-tRNA aminoacylation"/>
    <property type="evidence" value="ECO:0007669"/>
    <property type="project" value="UniProtKB-UniRule"/>
</dbReference>
<dbReference type="CDD" id="cd00773">
    <property type="entry name" value="HisRS-like_core"/>
    <property type="match status" value="1"/>
</dbReference>
<dbReference type="Gene3D" id="3.40.50.800">
    <property type="entry name" value="Anticodon-binding domain"/>
    <property type="match status" value="1"/>
</dbReference>
<dbReference type="Gene3D" id="3.30.930.10">
    <property type="entry name" value="Bira Bifunctional Protein, Domain 2"/>
    <property type="match status" value="1"/>
</dbReference>
<dbReference type="HAMAP" id="MF_00127">
    <property type="entry name" value="His_tRNA_synth"/>
    <property type="match status" value="1"/>
</dbReference>
<dbReference type="InterPro" id="IPR006195">
    <property type="entry name" value="aa-tRNA-synth_II"/>
</dbReference>
<dbReference type="InterPro" id="IPR045864">
    <property type="entry name" value="aa-tRNA-synth_II/BPL/LPL"/>
</dbReference>
<dbReference type="InterPro" id="IPR036621">
    <property type="entry name" value="Anticodon-bd_dom_sf"/>
</dbReference>
<dbReference type="InterPro" id="IPR015807">
    <property type="entry name" value="His-tRNA-ligase"/>
</dbReference>
<dbReference type="InterPro" id="IPR041715">
    <property type="entry name" value="HisRS-like_core"/>
</dbReference>
<dbReference type="InterPro" id="IPR004516">
    <property type="entry name" value="HisRS/HisZ"/>
</dbReference>
<dbReference type="NCBIfam" id="TIGR00442">
    <property type="entry name" value="hisS"/>
    <property type="match status" value="1"/>
</dbReference>
<dbReference type="PANTHER" id="PTHR43707:SF1">
    <property type="entry name" value="HISTIDINE--TRNA LIGASE, MITOCHONDRIAL-RELATED"/>
    <property type="match status" value="1"/>
</dbReference>
<dbReference type="PANTHER" id="PTHR43707">
    <property type="entry name" value="HISTIDYL-TRNA SYNTHETASE"/>
    <property type="match status" value="1"/>
</dbReference>
<dbReference type="Pfam" id="PF13393">
    <property type="entry name" value="tRNA-synt_His"/>
    <property type="match status" value="1"/>
</dbReference>
<dbReference type="PIRSF" id="PIRSF001549">
    <property type="entry name" value="His-tRNA_synth"/>
    <property type="match status" value="1"/>
</dbReference>
<dbReference type="SUPFAM" id="SSF52954">
    <property type="entry name" value="Class II aaRS ABD-related"/>
    <property type="match status" value="1"/>
</dbReference>
<dbReference type="SUPFAM" id="SSF55681">
    <property type="entry name" value="Class II aaRS and biotin synthetases"/>
    <property type="match status" value="1"/>
</dbReference>
<dbReference type="PROSITE" id="PS50862">
    <property type="entry name" value="AA_TRNA_LIGASE_II"/>
    <property type="match status" value="1"/>
</dbReference>
<proteinExistence type="inferred from homology"/>
<protein>
    <recommendedName>
        <fullName evidence="1">Histidine--tRNA ligase</fullName>
        <ecNumber evidence="1">6.1.1.21</ecNumber>
    </recommendedName>
    <alternativeName>
        <fullName evidence="1">Histidyl-tRNA synthetase</fullName>
        <shortName evidence="1">HisRS</shortName>
    </alternativeName>
</protein>
<sequence length="428" mass="50376">MKKKLNLCPKGTYDFFGQGAKIFIDVRKVFFNQAKKFNFSYIETPIFEYANIFLTTNQIADIVSKELYKFFDKSGRELALRPEGTAPIMRSVAQHKLFQTEKKFFYFGPMFRYENPQKGRFRQFYQAGFEIINYKKDSLEFQILEIILLIKSIFKDLGINEYELKINFLSNLTTRNIYEKNLAQYFEKFSDKLEPISKIRIKKNPLRILDDKIEQEKEFVKLAPKINTFWTMEDKNIFNRITSILEEFKISYKVDYNLVRGLDYYDDFVFEFIDTSQTLGTKLALVGGGCYNNLPTKFGLNNFKSIGMAFGIERLIEILKSKKNIKEQNLDFFLLSFTDKEILLNFKLAKILRKENFLVDLNKTPFSVSKGFQLAKKSGAKFVFFFEKNQAKNYISLKNLQTGKNEQILYTEINFEYLNSIIKASENA</sequence>
<comment type="catalytic activity">
    <reaction evidence="1">
        <text>tRNA(His) + L-histidine + ATP = L-histidyl-tRNA(His) + AMP + diphosphate + H(+)</text>
        <dbReference type="Rhea" id="RHEA:17313"/>
        <dbReference type="Rhea" id="RHEA-COMP:9665"/>
        <dbReference type="Rhea" id="RHEA-COMP:9689"/>
        <dbReference type="ChEBI" id="CHEBI:15378"/>
        <dbReference type="ChEBI" id="CHEBI:30616"/>
        <dbReference type="ChEBI" id="CHEBI:33019"/>
        <dbReference type="ChEBI" id="CHEBI:57595"/>
        <dbReference type="ChEBI" id="CHEBI:78442"/>
        <dbReference type="ChEBI" id="CHEBI:78527"/>
        <dbReference type="ChEBI" id="CHEBI:456215"/>
        <dbReference type="EC" id="6.1.1.21"/>
    </reaction>
</comment>
<comment type="subunit">
    <text evidence="1">Homodimer.</text>
</comment>
<comment type="subcellular location">
    <subcellularLocation>
        <location evidence="1">Cytoplasm</location>
    </subcellularLocation>
</comment>
<comment type="similarity">
    <text evidence="1">Belongs to the class-II aminoacyl-tRNA synthetase family.</text>
</comment>